<keyword id="KW-0012">Acyltransferase</keyword>
<keyword id="KW-0028">Amino-acid biosynthesis</keyword>
<keyword id="KW-0963">Cytoplasm</keyword>
<keyword id="KW-0220">Diaminopimelate biosynthesis</keyword>
<keyword id="KW-0457">Lysine biosynthesis</keyword>
<keyword id="KW-1185">Reference proteome</keyword>
<keyword id="KW-0677">Repeat</keyword>
<keyword id="KW-0808">Transferase</keyword>
<comment type="catalytic activity">
    <reaction evidence="1">
        <text>(S)-2,3,4,5-tetrahydrodipicolinate + succinyl-CoA + H2O = (S)-2-succinylamino-6-oxoheptanedioate + CoA</text>
        <dbReference type="Rhea" id="RHEA:17325"/>
        <dbReference type="ChEBI" id="CHEBI:15377"/>
        <dbReference type="ChEBI" id="CHEBI:15685"/>
        <dbReference type="ChEBI" id="CHEBI:16845"/>
        <dbReference type="ChEBI" id="CHEBI:57287"/>
        <dbReference type="ChEBI" id="CHEBI:57292"/>
        <dbReference type="EC" id="2.3.1.117"/>
    </reaction>
</comment>
<comment type="pathway">
    <text evidence="1">Amino-acid biosynthesis; L-lysine biosynthesis via DAP pathway; LL-2,6-diaminopimelate from (S)-tetrahydrodipicolinate (succinylase route): step 1/3.</text>
</comment>
<comment type="subunit">
    <text evidence="1">Homotrimer.</text>
</comment>
<comment type="subcellular location">
    <subcellularLocation>
        <location evidence="1">Cytoplasm</location>
    </subcellularLocation>
</comment>
<comment type="similarity">
    <text evidence="1">Belongs to the transferase hexapeptide repeat family.</text>
</comment>
<proteinExistence type="inferred from homology"/>
<protein>
    <recommendedName>
        <fullName evidence="1">2,3,4,5-tetrahydropyridine-2,6-dicarboxylate N-succinyltransferase</fullName>
        <ecNumber evidence="1">2.3.1.117</ecNumber>
    </recommendedName>
    <alternativeName>
        <fullName evidence="1">Tetrahydrodipicolinate N-succinyltransferase</fullName>
        <shortName evidence="1">THDP succinyltransferase</shortName>
        <shortName evidence="1">THP succinyltransferase</shortName>
        <shortName evidence="1">Tetrahydropicolinate succinylase</shortName>
    </alternativeName>
</protein>
<name>DAPD_SINFN</name>
<sequence>MTNHDLASLSQTIETAFEDREAVSTSTRGAIRDAVEAALNLLDSGKVRVAERGADGTWTVNQWLKKAVLLSFRLNPMELVKGGPGESVWWDKVASKFDGWSVNEFEKAGFRAVPNCVVRRSAYIAPNAILMPSFVNLGAYVGEGTMVDTWATVGSCAQIGKNVHLSGGVGIGGVLEPMQAGPTIIEDNCFIGARSEVVEGCIVREGSVLGMGVFIGKSTKIVDRATGEVTYGEVPPYSVVVAGSMPSGSTMANGQPAPNLYCAVIVKRVDEKTRSKTGINELLRD</sequence>
<feature type="chain" id="PRO_1000148587" description="2,3,4,5-tetrahydropyridine-2,6-dicarboxylate N-succinyltransferase">
    <location>
        <begin position="1"/>
        <end position="285"/>
    </location>
</feature>
<feature type="binding site" evidence="1">
    <location>
        <position position="111"/>
    </location>
    <ligand>
        <name>substrate</name>
    </ligand>
</feature>
<feature type="binding site" evidence="1">
    <location>
        <position position="148"/>
    </location>
    <ligand>
        <name>substrate</name>
    </ligand>
</feature>
<reference key="1">
    <citation type="journal article" date="2009" name="Appl. Environ. Microbiol.">
        <title>Rhizobium sp. strain NGR234 possesses a remarkable number of secretion systems.</title>
        <authorList>
            <person name="Schmeisser C."/>
            <person name="Liesegang H."/>
            <person name="Krysciak D."/>
            <person name="Bakkou N."/>
            <person name="Le Quere A."/>
            <person name="Wollherr A."/>
            <person name="Heinemeyer I."/>
            <person name="Morgenstern B."/>
            <person name="Pommerening-Roeser A."/>
            <person name="Flores M."/>
            <person name="Palacios R."/>
            <person name="Brenner S."/>
            <person name="Gottschalk G."/>
            <person name="Schmitz R.A."/>
            <person name="Broughton W.J."/>
            <person name="Perret X."/>
            <person name="Strittmatter A.W."/>
            <person name="Streit W.R."/>
        </authorList>
    </citation>
    <scope>NUCLEOTIDE SEQUENCE [LARGE SCALE GENOMIC DNA]</scope>
    <source>
        <strain>NBRC 101917 / NGR234</strain>
    </source>
</reference>
<organism>
    <name type="scientific">Sinorhizobium fredii (strain NBRC 101917 / NGR234)</name>
    <dbReference type="NCBI Taxonomy" id="394"/>
    <lineage>
        <taxon>Bacteria</taxon>
        <taxon>Pseudomonadati</taxon>
        <taxon>Pseudomonadota</taxon>
        <taxon>Alphaproteobacteria</taxon>
        <taxon>Hyphomicrobiales</taxon>
        <taxon>Rhizobiaceae</taxon>
        <taxon>Sinorhizobium/Ensifer group</taxon>
        <taxon>Sinorhizobium</taxon>
    </lineage>
</organism>
<accession>C3MF35</accession>
<dbReference type="EC" id="2.3.1.117" evidence="1"/>
<dbReference type="EMBL" id="CP001389">
    <property type="protein sequence ID" value="ACP23872.1"/>
    <property type="molecule type" value="Genomic_DNA"/>
</dbReference>
<dbReference type="RefSeq" id="WP_012706657.1">
    <property type="nucleotide sequence ID" value="NC_012587.1"/>
</dbReference>
<dbReference type="RefSeq" id="YP_002824625.1">
    <property type="nucleotide sequence ID" value="NC_012587.1"/>
</dbReference>
<dbReference type="SMR" id="C3MF35"/>
<dbReference type="STRING" id="394.NGR_c00680"/>
<dbReference type="KEGG" id="rhi:NGR_c00680"/>
<dbReference type="PATRIC" id="fig|394.7.peg.2861"/>
<dbReference type="eggNOG" id="COG2171">
    <property type="taxonomic scope" value="Bacteria"/>
</dbReference>
<dbReference type="HOGENOM" id="CLU_050859_0_1_5"/>
<dbReference type="OrthoDB" id="9775362at2"/>
<dbReference type="UniPathway" id="UPA00034">
    <property type="reaction ID" value="UER00019"/>
</dbReference>
<dbReference type="Proteomes" id="UP000001054">
    <property type="component" value="Chromosome"/>
</dbReference>
<dbReference type="GO" id="GO:0005737">
    <property type="term" value="C:cytoplasm"/>
    <property type="evidence" value="ECO:0007669"/>
    <property type="project" value="UniProtKB-SubCell"/>
</dbReference>
<dbReference type="GO" id="GO:0008666">
    <property type="term" value="F:2,3,4,5-tetrahydropyridine-2,6-dicarboxylate N-succinyltransferase activity"/>
    <property type="evidence" value="ECO:0007669"/>
    <property type="project" value="UniProtKB-UniRule"/>
</dbReference>
<dbReference type="GO" id="GO:0019877">
    <property type="term" value="P:diaminopimelate biosynthetic process"/>
    <property type="evidence" value="ECO:0007669"/>
    <property type="project" value="UniProtKB-UniRule"/>
</dbReference>
<dbReference type="GO" id="GO:0009089">
    <property type="term" value="P:lysine biosynthetic process via diaminopimelate"/>
    <property type="evidence" value="ECO:0007669"/>
    <property type="project" value="UniProtKB-UniRule"/>
</dbReference>
<dbReference type="CDD" id="cd03350">
    <property type="entry name" value="LbH_THP_succinylT"/>
    <property type="match status" value="1"/>
</dbReference>
<dbReference type="Gene3D" id="2.160.10.10">
    <property type="entry name" value="Hexapeptide repeat proteins"/>
    <property type="match status" value="1"/>
</dbReference>
<dbReference type="Gene3D" id="1.10.166.10">
    <property type="entry name" value="Tetrahydrodipicolinate-N-succinyltransferase, N-terminal domain"/>
    <property type="match status" value="1"/>
</dbReference>
<dbReference type="HAMAP" id="MF_00811">
    <property type="entry name" value="DapD"/>
    <property type="match status" value="1"/>
</dbReference>
<dbReference type="InterPro" id="IPR005664">
    <property type="entry name" value="DapD_Trfase_Hexpep_rpt_fam"/>
</dbReference>
<dbReference type="InterPro" id="IPR001451">
    <property type="entry name" value="Hexapep"/>
</dbReference>
<dbReference type="InterPro" id="IPR018357">
    <property type="entry name" value="Hexapep_transf_CS"/>
</dbReference>
<dbReference type="InterPro" id="IPR023180">
    <property type="entry name" value="THP_succinylTrfase_dom1"/>
</dbReference>
<dbReference type="InterPro" id="IPR037133">
    <property type="entry name" value="THP_succinylTrfase_N_sf"/>
</dbReference>
<dbReference type="InterPro" id="IPR050179">
    <property type="entry name" value="Trans_hexapeptide_repeat"/>
</dbReference>
<dbReference type="InterPro" id="IPR011004">
    <property type="entry name" value="Trimer_LpxA-like_sf"/>
</dbReference>
<dbReference type="NCBIfam" id="TIGR00965">
    <property type="entry name" value="dapD"/>
    <property type="match status" value="1"/>
</dbReference>
<dbReference type="NCBIfam" id="NF008808">
    <property type="entry name" value="PRK11830.1"/>
    <property type="match status" value="1"/>
</dbReference>
<dbReference type="PANTHER" id="PTHR43300:SF10">
    <property type="entry name" value="2,3,4,5-TETRAHYDROPYRIDINE-2,6-DICARBOXYLATE N-ACETYLTRANSFERASE"/>
    <property type="match status" value="1"/>
</dbReference>
<dbReference type="PANTHER" id="PTHR43300">
    <property type="entry name" value="ACETYLTRANSFERASE"/>
    <property type="match status" value="1"/>
</dbReference>
<dbReference type="Pfam" id="PF14602">
    <property type="entry name" value="Hexapep_2"/>
    <property type="match status" value="1"/>
</dbReference>
<dbReference type="Pfam" id="PF14805">
    <property type="entry name" value="THDPS_N_2"/>
    <property type="match status" value="1"/>
</dbReference>
<dbReference type="SUPFAM" id="SSF51161">
    <property type="entry name" value="Trimeric LpxA-like enzymes"/>
    <property type="match status" value="1"/>
</dbReference>
<dbReference type="PROSITE" id="PS00101">
    <property type="entry name" value="HEXAPEP_TRANSFERASES"/>
    <property type="match status" value="1"/>
</dbReference>
<gene>
    <name evidence="1" type="primary">dapD</name>
    <name type="ordered locus">NGR_c00680</name>
</gene>
<evidence type="ECO:0000255" key="1">
    <source>
        <dbReference type="HAMAP-Rule" id="MF_00811"/>
    </source>
</evidence>